<accession>A7IMA7</accession>
<evidence type="ECO:0000255" key="1">
    <source>
        <dbReference type="HAMAP-Rule" id="MF_00120"/>
    </source>
</evidence>
<feature type="chain" id="PRO_1000095179" description="Glutamyl-tRNA(Gln) amidotransferase subunit A">
    <location>
        <begin position="1"/>
        <end position="494"/>
    </location>
</feature>
<feature type="active site" description="Charge relay system" evidence="1">
    <location>
        <position position="78"/>
    </location>
</feature>
<feature type="active site" description="Charge relay system" evidence="1">
    <location>
        <position position="158"/>
    </location>
</feature>
<feature type="active site" description="Acyl-ester intermediate" evidence="1">
    <location>
        <position position="182"/>
    </location>
</feature>
<name>GATA_XANP2</name>
<proteinExistence type="inferred from homology"/>
<organism>
    <name type="scientific">Xanthobacter autotrophicus (strain ATCC BAA-1158 / Py2)</name>
    <dbReference type="NCBI Taxonomy" id="78245"/>
    <lineage>
        <taxon>Bacteria</taxon>
        <taxon>Pseudomonadati</taxon>
        <taxon>Pseudomonadota</taxon>
        <taxon>Alphaproteobacteria</taxon>
        <taxon>Hyphomicrobiales</taxon>
        <taxon>Xanthobacteraceae</taxon>
        <taxon>Xanthobacter</taxon>
    </lineage>
</organism>
<sequence length="494" mass="53088">MTKLTQLTLTQAREGLAQGEFTSVELTEAYLKAMEQARPLNAYVLETPEIALEMAKESDRRIASGETGPLEGIPLGIKDMFATEGVRTTACAKILDNFIPQYESTVTSHLWRDGAVLLGKLNNDEFAMGSSNETSAFGPVVSPWRRDGDETPLVPGGSSGGSAAAVAAFLCAGATGTDTGGSIRQPAAFTGTVGIKPTYGRCSRWGIVAFASSLDQAGPFARTVNDAAVLLKSMAGYDPKDSTCVNRPVPDYEEAVGASIKGKKIGIPREYRMDGMSDEIDALWTEGARFLKDAGAEIVDISLPHTQYALPAYYIVAPAEASSNLARYDGVRFGERVPGRDVVEMYENTRAAGFGPEVRRRIMIGTYVLSAGYYDAYYLRAQKVRSLIKRDFDQVFAQGVDAVLTPATPSPAFGIGEKLKADPVEMYLNDVFTVTVNMAGLPGIAVPAGLSADGLPLGLQLIGRPFEEETLFSLAEVIEEAAGRFPVDKQWWRG</sequence>
<gene>
    <name evidence="1" type="primary">gatA</name>
    <name type="ordered locus">Xaut_3926</name>
</gene>
<protein>
    <recommendedName>
        <fullName evidence="1">Glutamyl-tRNA(Gln) amidotransferase subunit A</fullName>
        <shortName evidence="1">Glu-ADT subunit A</shortName>
        <ecNumber evidence="1">6.3.5.7</ecNumber>
    </recommendedName>
</protein>
<keyword id="KW-0067">ATP-binding</keyword>
<keyword id="KW-0436">Ligase</keyword>
<keyword id="KW-0547">Nucleotide-binding</keyword>
<keyword id="KW-0648">Protein biosynthesis</keyword>
<keyword id="KW-1185">Reference proteome</keyword>
<comment type="function">
    <text evidence="1">Allows the formation of correctly charged Gln-tRNA(Gln) through the transamidation of misacylated Glu-tRNA(Gln) in organisms which lack glutaminyl-tRNA synthetase. The reaction takes place in the presence of glutamine and ATP through an activated gamma-phospho-Glu-tRNA(Gln).</text>
</comment>
<comment type="catalytic activity">
    <reaction evidence="1">
        <text>L-glutamyl-tRNA(Gln) + L-glutamine + ATP + H2O = L-glutaminyl-tRNA(Gln) + L-glutamate + ADP + phosphate + H(+)</text>
        <dbReference type="Rhea" id="RHEA:17521"/>
        <dbReference type="Rhea" id="RHEA-COMP:9681"/>
        <dbReference type="Rhea" id="RHEA-COMP:9684"/>
        <dbReference type="ChEBI" id="CHEBI:15377"/>
        <dbReference type="ChEBI" id="CHEBI:15378"/>
        <dbReference type="ChEBI" id="CHEBI:29985"/>
        <dbReference type="ChEBI" id="CHEBI:30616"/>
        <dbReference type="ChEBI" id="CHEBI:43474"/>
        <dbReference type="ChEBI" id="CHEBI:58359"/>
        <dbReference type="ChEBI" id="CHEBI:78520"/>
        <dbReference type="ChEBI" id="CHEBI:78521"/>
        <dbReference type="ChEBI" id="CHEBI:456216"/>
        <dbReference type="EC" id="6.3.5.7"/>
    </reaction>
</comment>
<comment type="subunit">
    <text evidence="1">Heterotrimer of A, B and C subunits.</text>
</comment>
<comment type="similarity">
    <text evidence="1">Belongs to the amidase family. GatA subfamily.</text>
</comment>
<reference key="1">
    <citation type="submission" date="2007-07" db="EMBL/GenBank/DDBJ databases">
        <title>Complete sequence of chromosome of Xanthobacter autotrophicus Py2.</title>
        <authorList>
            <consortium name="US DOE Joint Genome Institute"/>
            <person name="Copeland A."/>
            <person name="Lucas S."/>
            <person name="Lapidus A."/>
            <person name="Barry K."/>
            <person name="Glavina del Rio T."/>
            <person name="Hammon N."/>
            <person name="Israni S."/>
            <person name="Dalin E."/>
            <person name="Tice H."/>
            <person name="Pitluck S."/>
            <person name="Sims D."/>
            <person name="Brettin T."/>
            <person name="Bruce D."/>
            <person name="Detter J.C."/>
            <person name="Han C."/>
            <person name="Tapia R."/>
            <person name="Brainard J."/>
            <person name="Schmutz J."/>
            <person name="Larimer F."/>
            <person name="Land M."/>
            <person name="Hauser L."/>
            <person name="Kyrpides N."/>
            <person name="Kim E."/>
            <person name="Ensigns S.A."/>
            <person name="Richardson P."/>
        </authorList>
    </citation>
    <scope>NUCLEOTIDE SEQUENCE [LARGE SCALE GENOMIC DNA]</scope>
    <source>
        <strain>ATCC BAA-1158 / Py2</strain>
    </source>
</reference>
<dbReference type="EC" id="6.3.5.7" evidence="1"/>
<dbReference type="EMBL" id="CP000781">
    <property type="protein sequence ID" value="ABS69150.1"/>
    <property type="molecule type" value="Genomic_DNA"/>
</dbReference>
<dbReference type="SMR" id="A7IMA7"/>
<dbReference type="STRING" id="78245.Xaut_3926"/>
<dbReference type="KEGG" id="xau:Xaut_3926"/>
<dbReference type="eggNOG" id="COG0154">
    <property type="taxonomic scope" value="Bacteria"/>
</dbReference>
<dbReference type="HOGENOM" id="CLU_009600_0_3_5"/>
<dbReference type="OrthoDB" id="9811471at2"/>
<dbReference type="PhylomeDB" id="A7IMA7"/>
<dbReference type="Proteomes" id="UP000002417">
    <property type="component" value="Chromosome"/>
</dbReference>
<dbReference type="GO" id="GO:0030956">
    <property type="term" value="C:glutamyl-tRNA(Gln) amidotransferase complex"/>
    <property type="evidence" value="ECO:0007669"/>
    <property type="project" value="InterPro"/>
</dbReference>
<dbReference type="GO" id="GO:0005524">
    <property type="term" value="F:ATP binding"/>
    <property type="evidence" value="ECO:0007669"/>
    <property type="project" value="UniProtKB-KW"/>
</dbReference>
<dbReference type="GO" id="GO:0050567">
    <property type="term" value="F:glutaminyl-tRNA synthase (glutamine-hydrolyzing) activity"/>
    <property type="evidence" value="ECO:0007669"/>
    <property type="project" value="UniProtKB-UniRule"/>
</dbReference>
<dbReference type="GO" id="GO:0006412">
    <property type="term" value="P:translation"/>
    <property type="evidence" value="ECO:0007669"/>
    <property type="project" value="UniProtKB-UniRule"/>
</dbReference>
<dbReference type="Gene3D" id="3.90.1300.10">
    <property type="entry name" value="Amidase signature (AS) domain"/>
    <property type="match status" value="1"/>
</dbReference>
<dbReference type="HAMAP" id="MF_00120">
    <property type="entry name" value="GatA"/>
    <property type="match status" value="1"/>
</dbReference>
<dbReference type="InterPro" id="IPR000120">
    <property type="entry name" value="Amidase"/>
</dbReference>
<dbReference type="InterPro" id="IPR020556">
    <property type="entry name" value="Amidase_CS"/>
</dbReference>
<dbReference type="InterPro" id="IPR023631">
    <property type="entry name" value="Amidase_dom"/>
</dbReference>
<dbReference type="InterPro" id="IPR036928">
    <property type="entry name" value="AS_sf"/>
</dbReference>
<dbReference type="InterPro" id="IPR004412">
    <property type="entry name" value="GatA"/>
</dbReference>
<dbReference type="NCBIfam" id="TIGR00132">
    <property type="entry name" value="gatA"/>
    <property type="match status" value="1"/>
</dbReference>
<dbReference type="PANTHER" id="PTHR11895:SF151">
    <property type="entry name" value="GLUTAMYL-TRNA(GLN) AMIDOTRANSFERASE SUBUNIT A"/>
    <property type="match status" value="1"/>
</dbReference>
<dbReference type="PANTHER" id="PTHR11895">
    <property type="entry name" value="TRANSAMIDASE"/>
    <property type="match status" value="1"/>
</dbReference>
<dbReference type="Pfam" id="PF01425">
    <property type="entry name" value="Amidase"/>
    <property type="match status" value="1"/>
</dbReference>
<dbReference type="SUPFAM" id="SSF75304">
    <property type="entry name" value="Amidase signature (AS) enzymes"/>
    <property type="match status" value="1"/>
</dbReference>
<dbReference type="PROSITE" id="PS00571">
    <property type="entry name" value="AMIDASES"/>
    <property type="match status" value="1"/>
</dbReference>